<proteinExistence type="evidence at transcript level"/>
<organism>
    <name type="scientific">Pongo abelii</name>
    <name type="common">Sumatran orangutan</name>
    <name type="synonym">Pongo pygmaeus abelii</name>
    <dbReference type="NCBI Taxonomy" id="9601"/>
    <lineage>
        <taxon>Eukaryota</taxon>
        <taxon>Metazoa</taxon>
        <taxon>Chordata</taxon>
        <taxon>Craniata</taxon>
        <taxon>Vertebrata</taxon>
        <taxon>Euteleostomi</taxon>
        <taxon>Mammalia</taxon>
        <taxon>Eutheria</taxon>
        <taxon>Euarchontoglires</taxon>
        <taxon>Primates</taxon>
        <taxon>Haplorrhini</taxon>
        <taxon>Catarrhini</taxon>
        <taxon>Hominidae</taxon>
        <taxon>Pongo</taxon>
    </lineage>
</organism>
<keyword id="KW-0325">Glycoprotein</keyword>
<keyword id="KW-0472">Membrane</keyword>
<keyword id="KW-1185">Reference proteome</keyword>
<keyword id="KW-0732">Signal</keyword>
<keyword id="KW-0812">Transmembrane</keyword>
<keyword id="KW-1133">Transmembrane helix</keyword>
<sequence length="214" mass="22871">MVLGGCPVSYLLLCGQAALLLGNLLLLHCVSRSHSQNATAEPELTSAGAAQPEGPGAAASWEYSDPHSPVILCSYLPDEFIECEDPVDHVGNATASQELGYGCLKFGGQAYSDVEHTSVQCHALAGIECASPRTFLRENKPCIKYTGHYFITTLLYSFFLGCFGVDRFCLGHTGTAVGKLLTLGGLGIWWFVDLILLITGGLMPSDGSNWCTVY</sequence>
<dbReference type="EMBL" id="CR858354">
    <property type="protein sequence ID" value="CAH90587.1"/>
    <property type="molecule type" value="mRNA"/>
</dbReference>
<dbReference type="RefSeq" id="NP_001125316.1">
    <property type="nucleotide sequence ID" value="NM_001131844.1"/>
</dbReference>
<dbReference type="STRING" id="9601.ENSPPYP00000020777"/>
<dbReference type="GlyCosmos" id="Q5RCC0">
    <property type="glycosylation" value="1 site, No reported glycans"/>
</dbReference>
<dbReference type="GeneID" id="100172215"/>
<dbReference type="KEGG" id="pon:100172215"/>
<dbReference type="CTD" id="83877"/>
<dbReference type="eggNOG" id="KOG4272">
    <property type="taxonomic scope" value="Eukaryota"/>
</dbReference>
<dbReference type="InParanoid" id="Q5RCC0"/>
<dbReference type="OrthoDB" id="408511at2759"/>
<dbReference type="Proteomes" id="UP000001595">
    <property type="component" value="Unplaced"/>
</dbReference>
<dbReference type="GO" id="GO:0016020">
    <property type="term" value="C:membrane"/>
    <property type="evidence" value="ECO:0007669"/>
    <property type="project" value="UniProtKB-SubCell"/>
</dbReference>
<dbReference type="InterPro" id="IPR007829">
    <property type="entry name" value="TM2"/>
</dbReference>
<dbReference type="InterPro" id="IPR050932">
    <property type="entry name" value="TM2D1-3-like"/>
</dbReference>
<dbReference type="PANTHER" id="PTHR21016">
    <property type="entry name" value="BETA-AMYLOID BINDING PROTEIN-RELATED"/>
    <property type="match status" value="1"/>
</dbReference>
<dbReference type="PANTHER" id="PTHR21016:SF4">
    <property type="entry name" value="TM2 DOMAIN-CONTAINING PROTEIN 2"/>
    <property type="match status" value="1"/>
</dbReference>
<dbReference type="Pfam" id="PF05154">
    <property type="entry name" value="TM2"/>
    <property type="match status" value="1"/>
</dbReference>
<protein>
    <recommendedName>
        <fullName>TM2 domain-containing protein 2</fullName>
    </recommendedName>
</protein>
<reference key="1">
    <citation type="submission" date="2004-11" db="EMBL/GenBank/DDBJ databases">
        <authorList>
            <consortium name="The German cDNA consortium"/>
        </authorList>
    </citation>
    <scope>NUCLEOTIDE SEQUENCE [LARGE SCALE MRNA]</scope>
    <source>
        <tissue>Brain cortex</tissue>
    </source>
</reference>
<gene>
    <name type="primary">TM2D2</name>
</gene>
<comment type="subcellular location">
    <subcellularLocation>
        <location evidence="4">Membrane</location>
        <topology evidence="4">Multi-pass membrane protein</topology>
    </subcellularLocation>
</comment>
<comment type="similarity">
    <text evidence="4">Belongs to the TM2 family.</text>
</comment>
<name>TM2D2_PONAB</name>
<accession>Q5RCC0</accession>
<feature type="signal peptide" evidence="1">
    <location>
        <begin position="1"/>
        <end position="22"/>
    </location>
</feature>
<feature type="chain" id="PRO_0000298984" description="TM2 domain-containing protein 2" evidence="1">
    <location>
        <begin position="23"/>
        <end position="214"/>
    </location>
</feature>
<feature type="topological domain" description="Extracellular" evidence="4">
    <location>
        <begin position="23"/>
        <end position="144"/>
    </location>
</feature>
<feature type="transmembrane region" description="Helical" evidence="1">
    <location>
        <begin position="145"/>
        <end position="165"/>
    </location>
</feature>
<feature type="topological domain" description="Cytoplasmic" evidence="4">
    <location>
        <begin position="166"/>
        <end position="182"/>
    </location>
</feature>
<feature type="transmembrane region" description="Helical" evidence="1">
    <location>
        <begin position="183"/>
        <end position="203"/>
    </location>
</feature>
<feature type="topological domain" description="Extracellular" evidence="4">
    <location>
        <begin position="204"/>
        <end position="214"/>
    </location>
</feature>
<feature type="domain" description="TM2" evidence="1">
    <location>
        <begin position="147"/>
        <end position="195"/>
    </location>
</feature>
<feature type="region of interest" description="Disordered" evidence="3">
    <location>
        <begin position="40"/>
        <end position="61"/>
    </location>
</feature>
<feature type="compositionally biased region" description="Low complexity" evidence="3">
    <location>
        <begin position="47"/>
        <end position="59"/>
    </location>
</feature>
<feature type="glycosylation site" description="N-linked (GlcNAc...) asparagine" evidence="2">
    <location>
        <position position="37"/>
    </location>
</feature>
<feature type="glycosylation site" description="N-linked (GlcNAc...) asparagine" evidence="2">
    <location>
        <position position="92"/>
    </location>
</feature>
<evidence type="ECO:0000255" key="1"/>
<evidence type="ECO:0000255" key="2">
    <source>
        <dbReference type="PROSITE-ProRule" id="PRU00498"/>
    </source>
</evidence>
<evidence type="ECO:0000256" key="3">
    <source>
        <dbReference type="SAM" id="MobiDB-lite"/>
    </source>
</evidence>
<evidence type="ECO:0000305" key="4"/>